<reference key="1">
    <citation type="journal article" date="1991" name="Mol. Microbiol.">
        <title>L-pilin variants of Neisseria gonorrhoeae MS11.</title>
        <authorList>
            <person name="Manning P.A."/>
            <person name="Kaufmann A."/>
            <person name="Roll U."/>
            <person name="Pohlner J."/>
            <person name="Meyer T.F."/>
            <person name="Haas R."/>
        </authorList>
    </citation>
    <scope>NUCLEOTIDE SEQUENCE [GENOMIC DNA]</scope>
    <source>
        <strain>MS11 / Isolate D1</strain>
    </source>
</reference>
<name>FMD1_NEIGO</name>
<protein>
    <recommendedName>
        <fullName>Type IV major pilin protein PilE1</fullName>
    </recommendedName>
    <alternativeName>
        <fullName>L-pilin</fullName>
    </alternativeName>
</protein>
<evidence type="ECO:0000250" key="1"/>
<evidence type="ECO:0000250" key="2">
    <source>
        <dbReference type="UniProtKB" id="P02974"/>
    </source>
</evidence>
<evidence type="ECO:0000255" key="3"/>
<evidence type="ECO:0000255" key="4">
    <source>
        <dbReference type="PROSITE-ProRule" id="PRU01070"/>
    </source>
</evidence>
<evidence type="ECO:0000256" key="5">
    <source>
        <dbReference type="SAM" id="MobiDB-lite"/>
    </source>
</evidence>
<evidence type="ECO:0000305" key="6"/>
<gene>
    <name type="primary">pilE1</name>
</gene>
<feature type="propeptide" id="PRO_0000024158" description="Leader sequence" evidence="4">
    <location>
        <begin position="1"/>
        <end position="7"/>
    </location>
</feature>
<feature type="chain" id="PRO_0000024159" description="Type IV major pilin protein PilE1">
    <location>
        <begin position="8"/>
        <end position="214"/>
    </location>
</feature>
<feature type="transmembrane region" description="Helical" evidence="3">
    <location>
        <begin position="8"/>
        <end position="28"/>
    </location>
</feature>
<feature type="region of interest" description="Disordered" evidence="5">
    <location>
        <begin position="182"/>
        <end position="214"/>
    </location>
</feature>
<feature type="compositionally biased region" description="Basic and acidic residues" evidence="5">
    <location>
        <begin position="192"/>
        <end position="214"/>
    </location>
</feature>
<feature type="modified residue" description="N-methylphenylalanine" evidence="4">
    <location>
        <position position="8"/>
    </location>
</feature>
<feature type="disulfide bond" evidence="1">
    <location>
        <begin position="127"/>
        <end position="161"/>
    </location>
</feature>
<organism>
    <name type="scientific">Neisseria gonorrhoeae</name>
    <dbReference type="NCBI Taxonomy" id="485"/>
    <lineage>
        <taxon>Bacteria</taxon>
        <taxon>Pseudomonadati</taxon>
        <taxon>Pseudomonadota</taxon>
        <taxon>Betaproteobacteria</taxon>
        <taxon>Neisseriales</taxon>
        <taxon>Neisseriaceae</taxon>
        <taxon>Neisseria</taxon>
    </lineage>
</organism>
<accession>Q00045</accession>
<comment type="function">
    <text evidence="2">Major component of the type IV pilus (T4P) that plays a role in cellular adherence, microcolony formation, resistance to neutrophil mediated killing, twitching motility as well as transformation. Mediates the attachment and the formation of bacterial microcolonies on host epithelial cells. Mechanistically, pili retractation induces host NF-kappa-B activation in infected cells, which is temporally associated with the formation of gonococcal microcolonies.</text>
</comment>
<comment type="subunit">
    <text>The pili are polar flexible filaments of about 5.4 nanometers diameter and 2.5 micrometers average length; they consist of only a single polypeptide chain arranged in a helical configuration of five subunits per turn in the assembled pilus.</text>
</comment>
<comment type="subcellular location">
    <subcellularLocation>
        <location>Fimbrium</location>
    </subcellularLocation>
    <subcellularLocation>
        <location evidence="3">Membrane</location>
        <topology evidence="3">Single-pass membrane protein</topology>
    </subcellularLocation>
</comment>
<comment type="similarity">
    <text evidence="6">Belongs to the N-Me-Phe pilin family.</text>
</comment>
<dbReference type="EMBL" id="X58403">
    <property type="protein sequence ID" value="CAA41301.1"/>
    <property type="molecule type" value="Genomic_DNA"/>
</dbReference>
<dbReference type="PIR" id="S15326">
    <property type="entry name" value="S15326"/>
</dbReference>
<dbReference type="SMR" id="Q00045"/>
<dbReference type="GO" id="GO:0016020">
    <property type="term" value="C:membrane"/>
    <property type="evidence" value="ECO:0007669"/>
    <property type="project" value="UniProtKB-SubCell"/>
</dbReference>
<dbReference type="GO" id="GO:0009289">
    <property type="term" value="C:pilus"/>
    <property type="evidence" value="ECO:0007669"/>
    <property type="project" value="UniProtKB-SubCell"/>
</dbReference>
<dbReference type="GO" id="GO:0007155">
    <property type="term" value="P:cell adhesion"/>
    <property type="evidence" value="ECO:0007669"/>
    <property type="project" value="UniProtKB-KW"/>
</dbReference>
<dbReference type="Gene3D" id="3.30.700.10">
    <property type="entry name" value="Glycoprotein, Type 4 Pilin"/>
    <property type="match status" value="2"/>
</dbReference>
<dbReference type="InterPro" id="IPR012902">
    <property type="entry name" value="N_methyl_site"/>
</dbReference>
<dbReference type="InterPro" id="IPR001082">
    <property type="entry name" value="Pilin"/>
</dbReference>
<dbReference type="InterPro" id="IPR045584">
    <property type="entry name" value="Pilin-like"/>
</dbReference>
<dbReference type="InterPro" id="IPR050470">
    <property type="entry name" value="T4P/T2SS_Core"/>
</dbReference>
<dbReference type="NCBIfam" id="TIGR02532">
    <property type="entry name" value="IV_pilin_GFxxxE"/>
    <property type="match status" value="1"/>
</dbReference>
<dbReference type="PANTHER" id="PTHR30093">
    <property type="entry name" value="GENERAL SECRETION PATHWAY PROTEIN G"/>
    <property type="match status" value="1"/>
</dbReference>
<dbReference type="PANTHER" id="PTHR30093:SF34">
    <property type="entry name" value="PREPILIN PEPTIDASE-DEPENDENT PROTEIN D"/>
    <property type="match status" value="1"/>
</dbReference>
<dbReference type="Pfam" id="PF07963">
    <property type="entry name" value="N_methyl"/>
    <property type="match status" value="1"/>
</dbReference>
<dbReference type="Pfam" id="PF00114">
    <property type="entry name" value="Pilin"/>
    <property type="match status" value="1"/>
</dbReference>
<dbReference type="SUPFAM" id="SSF54523">
    <property type="entry name" value="Pili subunits"/>
    <property type="match status" value="1"/>
</dbReference>
<dbReference type="PROSITE" id="PS00409">
    <property type="entry name" value="PROKAR_NTER_METHYL"/>
    <property type="match status" value="1"/>
</dbReference>
<sequence length="214" mass="23021">MNTLQKGFTLIELMIVIAIVGILAAVALPAYQDYTARAQVSEAILLAEGQKSAVTEYYLNHGIWPENNPAGVASPASDIKGKYVQSVTVANGVVTAQMKSDGVNKEIKNKKLSLWARREAGSVKWFCGQPVTRDNAGTDAVTADTTGKDKEIDTKHLPSTCRCFQIGSVKWFCGQPVTRDNAGTDAVTADTTGKDKEIDTKHLPSTCRDKSSAE</sequence>
<proteinExistence type="inferred from homology"/>
<keyword id="KW-0130">Cell adhesion</keyword>
<keyword id="KW-1015">Disulfide bond</keyword>
<keyword id="KW-0281">Fimbrium</keyword>
<keyword id="KW-0472">Membrane</keyword>
<keyword id="KW-0488">Methylation</keyword>
<keyword id="KW-0812">Transmembrane</keyword>
<keyword id="KW-1133">Transmembrane helix</keyword>